<gene>
    <name evidence="1" type="primary">yabA</name>
    <name type="ordered locus">SPP_0943</name>
</gene>
<feature type="chain" id="PRO_1000164311" description="Replication initiation control protein YabA">
    <location>
        <begin position="1"/>
        <end position="105"/>
    </location>
</feature>
<feature type="binding site" evidence="1">
    <location>
        <position position="79"/>
    </location>
    <ligand>
        <name>Zn(2+)</name>
        <dbReference type="ChEBI" id="CHEBI:29105"/>
    </ligand>
</feature>
<feature type="binding site" evidence="1">
    <location>
        <position position="81"/>
    </location>
    <ligand>
        <name>Zn(2+)</name>
        <dbReference type="ChEBI" id="CHEBI:29105"/>
    </ligand>
</feature>
<feature type="binding site" evidence="1">
    <location>
        <position position="95"/>
    </location>
    <ligand>
        <name>Zn(2+)</name>
        <dbReference type="ChEBI" id="CHEBI:29105"/>
    </ligand>
</feature>
<feature type="binding site" evidence="1">
    <location>
        <position position="98"/>
    </location>
    <ligand>
        <name>Zn(2+)</name>
        <dbReference type="ChEBI" id="CHEBI:29105"/>
    </ligand>
</feature>
<proteinExistence type="inferred from homology"/>
<accession>C1CK22</accession>
<comment type="function">
    <text evidence="1">Involved in control of chromosome replication initiation. Inhibits the cooperative binding of DnaA to the oriC region, thus negatively regulating initiation of chromosome replication. Inhibits the ability of DnaA-ATP to form a helix on DNA; does not disassemble preformed DnaA-DNA helices. Decreases the residence time of DnaA on the chromosome at its binding sites (oriC, replication forks and promoter-binding sites). Tethers DnaA to the replication machinery via the DNA polymerase beta sliding clamp subunit (dnaN). Associates with oriC and other DnaA targets on the chromosome in a DnaA-dependent manner.</text>
</comment>
<comment type="cofactor">
    <cofactor evidence="1">
        <name>Zn(2+)</name>
        <dbReference type="ChEBI" id="CHEBI:29105"/>
    </cofactor>
    <text evidence="1">Binds 1 zinc ion per subunit.</text>
</comment>
<comment type="subunit">
    <text evidence="1">Homotetramer. Interacts with both DnaA and DnaN, acting as a bridge between these two proteins.</text>
</comment>
<comment type="subcellular location">
    <subcellularLocation>
        <location evidence="1">Cytoplasm</location>
        <location evidence="1">Nucleoid</location>
    </subcellularLocation>
    <text evidence="1">Localizes in tight foci, which correspond to the replisome at mid-cell throughout the cell cycle.</text>
</comment>
<comment type="similarity">
    <text evidence="1">Belongs to the YabA family.</text>
</comment>
<sequence length="105" mass="12411">MDKKELFDALDDFSQQLLVTLADVEAIKKNLKSLVEENTALRLENSKLRERLGEVEADAPVKAKHVRESVRRIYRDGFHVCNDFYGQRREQDEECMFCDELLYRE</sequence>
<protein>
    <recommendedName>
        <fullName evidence="1">Replication initiation control protein YabA</fullName>
    </recommendedName>
</protein>
<dbReference type="EMBL" id="CP000920">
    <property type="protein sequence ID" value="ACO21669.1"/>
    <property type="molecule type" value="Genomic_DNA"/>
</dbReference>
<dbReference type="RefSeq" id="WP_000358228.1">
    <property type="nucleotide sequence ID" value="NC_012467.1"/>
</dbReference>
<dbReference type="SMR" id="C1CK22"/>
<dbReference type="GeneID" id="93739792"/>
<dbReference type="KEGG" id="spp:SPP_0943"/>
<dbReference type="HOGENOM" id="CLU_157169_0_0_9"/>
<dbReference type="GO" id="GO:0009295">
    <property type="term" value="C:nucleoid"/>
    <property type="evidence" value="ECO:0007669"/>
    <property type="project" value="UniProtKB-SubCell"/>
</dbReference>
<dbReference type="GO" id="GO:0006260">
    <property type="term" value="P:DNA replication"/>
    <property type="evidence" value="ECO:0007669"/>
    <property type="project" value="UniProtKB-UniRule"/>
</dbReference>
<dbReference type="HAMAP" id="MF_01159">
    <property type="entry name" value="YabA"/>
    <property type="match status" value="1"/>
</dbReference>
<dbReference type="InterPro" id="IPR010377">
    <property type="entry name" value="YabA"/>
</dbReference>
<dbReference type="NCBIfam" id="NF009640">
    <property type="entry name" value="PRK13169.1-1"/>
    <property type="match status" value="1"/>
</dbReference>
<dbReference type="Pfam" id="PF06156">
    <property type="entry name" value="YabA"/>
    <property type="match status" value="1"/>
</dbReference>
<dbReference type="PIRSF" id="PIRSF021439">
    <property type="entry name" value="DUF972"/>
    <property type="match status" value="1"/>
</dbReference>
<organism>
    <name type="scientific">Streptococcus pneumoniae (strain P1031)</name>
    <dbReference type="NCBI Taxonomy" id="488223"/>
    <lineage>
        <taxon>Bacteria</taxon>
        <taxon>Bacillati</taxon>
        <taxon>Bacillota</taxon>
        <taxon>Bacilli</taxon>
        <taxon>Lactobacillales</taxon>
        <taxon>Streptococcaceae</taxon>
        <taxon>Streptococcus</taxon>
    </lineage>
</organism>
<name>YABA_STRZP</name>
<reference key="1">
    <citation type="journal article" date="2010" name="Genome Biol.">
        <title>Structure and dynamics of the pan-genome of Streptococcus pneumoniae and closely related species.</title>
        <authorList>
            <person name="Donati C."/>
            <person name="Hiller N.L."/>
            <person name="Tettelin H."/>
            <person name="Muzzi A."/>
            <person name="Croucher N.J."/>
            <person name="Angiuoli S.V."/>
            <person name="Oggioni M."/>
            <person name="Dunning Hotopp J.C."/>
            <person name="Hu F.Z."/>
            <person name="Riley D.R."/>
            <person name="Covacci A."/>
            <person name="Mitchell T.J."/>
            <person name="Bentley S.D."/>
            <person name="Kilian M."/>
            <person name="Ehrlich G.D."/>
            <person name="Rappuoli R."/>
            <person name="Moxon E.R."/>
            <person name="Masignani V."/>
        </authorList>
    </citation>
    <scope>NUCLEOTIDE SEQUENCE [LARGE SCALE GENOMIC DNA]</scope>
    <source>
        <strain>P1031</strain>
    </source>
</reference>
<keyword id="KW-0963">Cytoplasm</keyword>
<keyword id="KW-0235">DNA replication</keyword>
<keyword id="KW-0236">DNA replication inhibitor</keyword>
<keyword id="KW-0479">Metal-binding</keyword>
<keyword id="KW-0862">Zinc</keyword>
<evidence type="ECO:0000255" key="1">
    <source>
        <dbReference type="HAMAP-Rule" id="MF_01159"/>
    </source>
</evidence>